<accession>Q6HPR6</accession>
<name>RPOB_BACHK</name>
<comment type="function">
    <text evidence="1">DNA-dependent RNA polymerase catalyzes the transcription of DNA into RNA using the four ribonucleoside triphosphates as substrates.</text>
</comment>
<comment type="catalytic activity">
    <reaction evidence="1">
        <text>RNA(n) + a ribonucleoside 5'-triphosphate = RNA(n+1) + diphosphate</text>
        <dbReference type="Rhea" id="RHEA:21248"/>
        <dbReference type="Rhea" id="RHEA-COMP:14527"/>
        <dbReference type="Rhea" id="RHEA-COMP:17342"/>
        <dbReference type="ChEBI" id="CHEBI:33019"/>
        <dbReference type="ChEBI" id="CHEBI:61557"/>
        <dbReference type="ChEBI" id="CHEBI:140395"/>
        <dbReference type="EC" id="2.7.7.6"/>
    </reaction>
</comment>
<comment type="subunit">
    <text evidence="1">The RNAP catalytic core consists of 2 alpha, 1 beta, 1 beta' and 1 omega subunit. When a sigma factor is associated with the core the holoenzyme is formed, which can initiate transcription.</text>
</comment>
<comment type="similarity">
    <text evidence="1">Belongs to the RNA polymerase beta chain family.</text>
</comment>
<proteinExistence type="inferred from homology"/>
<gene>
    <name evidence="1" type="primary">rpoB</name>
    <name type="ordered locus">BT9727_0098</name>
</gene>
<dbReference type="EC" id="2.7.7.6" evidence="1"/>
<dbReference type="EMBL" id="AE017355">
    <property type="protein sequence ID" value="AAT61488.1"/>
    <property type="molecule type" value="Genomic_DNA"/>
</dbReference>
<dbReference type="RefSeq" id="WP_000147554.1">
    <property type="nucleotide sequence ID" value="NC_005957.1"/>
</dbReference>
<dbReference type="RefSeq" id="YP_034454.1">
    <property type="nucleotide sequence ID" value="NC_005957.1"/>
</dbReference>
<dbReference type="SMR" id="Q6HPR6"/>
<dbReference type="GeneID" id="75083383"/>
<dbReference type="KEGG" id="btk:BT9727_0098"/>
<dbReference type="PATRIC" id="fig|281309.8.peg.99"/>
<dbReference type="HOGENOM" id="CLU_000524_4_1_9"/>
<dbReference type="Proteomes" id="UP000001301">
    <property type="component" value="Chromosome"/>
</dbReference>
<dbReference type="GO" id="GO:0000428">
    <property type="term" value="C:DNA-directed RNA polymerase complex"/>
    <property type="evidence" value="ECO:0007669"/>
    <property type="project" value="UniProtKB-KW"/>
</dbReference>
<dbReference type="GO" id="GO:0003677">
    <property type="term" value="F:DNA binding"/>
    <property type="evidence" value="ECO:0007669"/>
    <property type="project" value="UniProtKB-UniRule"/>
</dbReference>
<dbReference type="GO" id="GO:0003899">
    <property type="term" value="F:DNA-directed RNA polymerase activity"/>
    <property type="evidence" value="ECO:0007669"/>
    <property type="project" value="UniProtKB-UniRule"/>
</dbReference>
<dbReference type="GO" id="GO:0032549">
    <property type="term" value="F:ribonucleoside binding"/>
    <property type="evidence" value="ECO:0007669"/>
    <property type="project" value="InterPro"/>
</dbReference>
<dbReference type="GO" id="GO:0006351">
    <property type="term" value="P:DNA-templated transcription"/>
    <property type="evidence" value="ECO:0007669"/>
    <property type="project" value="UniProtKB-UniRule"/>
</dbReference>
<dbReference type="CDD" id="cd00653">
    <property type="entry name" value="RNA_pol_B_RPB2"/>
    <property type="match status" value="1"/>
</dbReference>
<dbReference type="FunFam" id="3.90.1800.10:FF:000001">
    <property type="entry name" value="DNA-directed RNA polymerase subunit beta"/>
    <property type="match status" value="1"/>
</dbReference>
<dbReference type="Gene3D" id="2.40.50.100">
    <property type="match status" value="1"/>
</dbReference>
<dbReference type="Gene3D" id="2.40.50.150">
    <property type="match status" value="1"/>
</dbReference>
<dbReference type="Gene3D" id="3.90.1100.10">
    <property type="match status" value="2"/>
</dbReference>
<dbReference type="Gene3D" id="2.30.150.10">
    <property type="entry name" value="DNA-directed RNA polymerase, beta subunit, external 1 domain"/>
    <property type="match status" value="1"/>
</dbReference>
<dbReference type="Gene3D" id="2.40.270.10">
    <property type="entry name" value="DNA-directed RNA polymerase, subunit 2, domain 6"/>
    <property type="match status" value="1"/>
</dbReference>
<dbReference type="Gene3D" id="3.90.1800.10">
    <property type="entry name" value="RNA polymerase alpha subunit dimerisation domain"/>
    <property type="match status" value="1"/>
</dbReference>
<dbReference type="Gene3D" id="3.90.1110.10">
    <property type="entry name" value="RNA polymerase Rpb2, domain 2"/>
    <property type="match status" value="1"/>
</dbReference>
<dbReference type="HAMAP" id="MF_01321">
    <property type="entry name" value="RNApol_bact_RpoB"/>
    <property type="match status" value="1"/>
</dbReference>
<dbReference type="InterPro" id="IPR042107">
    <property type="entry name" value="DNA-dir_RNA_pol_bsu_ext_1_sf"/>
</dbReference>
<dbReference type="InterPro" id="IPR019462">
    <property type="entry name" value="DNA-dir_RNA_pol_bsu_external_1"/>
</dbReference>
<dbReference type="InterPro" id="IPR015712">
    <property type="entry name" value="DNA-dir_RNA_pol_su2"/>
</dbReference>
<dbReference type="InterPro" id="IPR007120">
    <property type="entry name" value="DNA-dir_RNAP_su2_dom"/>
</dbReference>
<dbReference type="InterPro" id="IPR037033">
    <property type="entry name" value="DNA-dir_RNAP_su2_hyb_sf"/>
</dbReference>
<dbReference type="InterPro" id="IPR010243">
    <property type="entry name" value="RNA_pol_bsu_bac"/>
</dbReference>
<dbReference type="InterPro" id="IPR007121">
    <property type="entry name" value="RNA_pol_bsu_CS"/>
</dbReference>
<dbReference type="InterPro" id="IPR007644">
    <property type="entry name" value="RNA_pol_bsu_protrusion"/>
</dbReference>
<dbReference type="InterPro" id="IPR007642">
    <property type="entry name" value="RNA_pol_Rpb2_2"/>
</dbReference>
<dbReference type="InterPro" id="IPR037034">
    <property type="entry name" value="RNA_pol_Rpb2_2_sf"/>
</dbReference>
<dbReference type="InterPro" id="IPR007645">
    <property type="entry name" value="RNA_pol_Rpb2_3"/>
</dbReference>
<dbReference type="InterPro" id="IPR007641">
    <property type="entry name" value="RNA_pol_Rpb2_7"/>
</dbReference>
<dbReference type="InterPro" id="IPR014724">
    <property type="entry name" value="RNA_pol_RPB2_OB-fold"/>
</dbReference>
<dbReference type="NCBIfam" id="NF001616">
    <property type="entry name" value="PRK00405.1"/>
    <property type="match status" value="1"/>
</dbReference>
<dbReference type="NCBIfam" id="TIGR02013">
    <property type="entry name" value="rpoB"/>
    <property type="match status" value="1"/>
</dbReference>
<dbReference type="PANTHER" id="PTHR20856">
    <property type="entry name" value="DNA-DIRECTED RNA POLYMERASE I SUBUNIT 2"/>
    <property type="match status" value="1"/>
</dbReference>
<dbReference type="Pfam" id="PF04563">
    <property type="entry name" value="RNA_pol_Rpb2_1"/>
    <property type="match status" value="1"/>
</dbReference>
<dbReference type="Pfam" id="PF04561">
    <property type="entry name" value="RNA_pol_Rpb2_2"/>
    <property type="match status" value="2"/>
</dbReference>
<dbReference type="Pfam" id="PF04565">
    <property type="entry name" value="RNA_pol_Rpb2_3"/>
    <property type="match status" value="1"/>
</dbReference>
<dbReference type="Pfam" id="PF10385">
    <property type="entry name" value="RNA_pol_Rpb2_45"/>
    <property type="match status" value="1"/>
</dbReference>
<dbReference type="Pfam" id="PF00562">
    <property type="entry name" value="RNA_pol_Rpb2_6"/>
    <property type="match status" value="1"/>
</dbReference>
<dbReference type="Pfam" id="PF04560">
    <property type="entry name" value="RNA_pol_Rpb2_7"/>
    <property type="match status" value="1"/>
</dbReference>
<dbReference type="SUPFAM" id="SSF64484">
    <property type="entry name" value="beta and beta-prime subunits of DNA dependent RNA-polymerase"/>
    <property type="match status" value="1"/>
</dbReference>
<dbReference type="PROSITE" id="PS01166">
    <property type="entry name" value="RNA_POL_BETA"/>
    <property type="match status" value="1"/>
</dbReference>
<reference key="1">
    <citation type="journal article" date="2006" name="J. Bacteriol.">
        <title>Pathogenomic sequence analysis of Bacillus cereus and Bacillus thuringiensis isolates closely related to Bacillus anthracis.</title>
        <authorList>
            <person name="Han C.S."/>
            <person name="Xie G."/>
            <person name="Challacombe J.F."/>
            <person name="Altherr M.R."/>
            <person name="Bhotika S.S."/>
            <person name="Bruce D."/>
            <person name="Campbell C.S."/>
            <person name="Campbell M.L."/>
            <person name="Chen J."/>
            <person name="Chertkov O."/>
            <person name="Cleland C."/>
            <person name="Dimitrijevic M."/>
            <person name="Doggett N.A."/>
            <person name="Fawcett J.J."/>
            <person name="Glavina T."/>
            <person name="Goodwin L.A."/>
            <person name="Hill K.K."/>
            <person name="Hitchcock P."/>
            <person name="Jackson P.J."/>
            <person name="Keim P."/>
            <person name="Kewalramani A.R."/>
            <person name="Longmire J."/>
            <person name="Lucas S."/>
            <person name="Malfatti S."/>
            <person name="McMurry K."/>
            <person name="Meincke L.J."/>
            <person name="Misra M."/>
            <person name="Moseman B.L."/>
            <person name="Mundt M."/>
            <person name="Munk A.C."/>
            <person name="Okinaka R.T."/>
            <person name="Parson-Quintana B."/>
            <person name="Reilly L.P."/>
            <person name="Richardson P."/>
            <person name="Robinson D.L."/>
            <person name="Rubin E."/>
            <person name="Saunders E."/>
            <person name="Tapia R."/>
            <person name="Tesmer J.G."/>
            <person name="Thayer N."/>
            <person name="Thompson L.S."/>
            <person name="Tice H."/>
            <person name="Ticknor L.O."/>
            <person name="Wills P.L."/>
            <person name="Brettin T.S."/>
            <person name="Gilna P."/>
        </authorList>
    </citation>
    <scope>NUCLEOTIDE SEQUENCE [LARGE SCALE GENOMIC DNA]</scope>
    <source>
        <strain>97-27</strain>
    </source>
</reference>
<evidence type="ECO:0000255" key="1">
    <source>
        <dbReference type="HAMAP-Rule" id="MF_01321"/>
    </source>
</evidence>
<evidence type="ECO:0000256" key="2">
    <source>
        <dbReference type="SAM" id="MobiDB-lite"/>
    </source>
</evidence>
<keyword id="KW-0240">DNA-directed RNA polymerase</keyword>
<keyword id="KW-0548">Nucleotidyltransferase</keyword>
<keyword id="KW-0804">Transcription</keyword>
<keyword id="KW-0808">Transferase</keyword>
<protein>
    <recommendedName>
        <fullName evidence="1">DNA-directed RNA polymerase subunit beta</fullName>
        <shortName evidence="1">RNAP subunit beta</shortName>
        <ecNumber evidence="1">2.7.7.6</ecNumber>
    </recommendedName>
    <alternativeName>
        <fullName evidence="1">RNA polymerase subunit beta</fullName>
    </alternativeName>
    <alternativeName>
        <fullName evidence="1">Transcriptase subunit beta</fullName>
    </alternativeName>
</protein>
<sequence length="1177" mass="131893">MTGQLVQYGRHRQRRSYARISEVLELPNLIEIQTSSYQWFLDEGLREMFQDISPIEDFTGNLSLEFIDYSLGEPKYSVDECKERDVTYAAPLRVKVRLINKETGEVKEQDVFMGDFPLMTETGTFVINGAERVIVSQLVRSPSVYYSGKVDKNGKRGFTATVIPNRGAWLEYETDAKDVVYVRIDRTRKLPVTVLLRALGFGSDQEITELLGDNEYLSNTLEKDNTDSTEKALLEIYERLRPGEPPTVENAKSLLVSRFFDPKRYDLANVGRYKINKKLHIKNRLFNQRLAETLVDPETGEILAAEGTILDRRTLDRILPYLEKNIGFKTAKPMGGVVEGDVELQSIKIYAPESEGERVINVIGNANITRDVKHITPGDILASISYFFNLLYKVGDTDDIDHLGNRRLRSVGELLQNQFRIGLSRMERVVRERMSIQDTNAITPQALINIRPVIASIKEFFGSSQLSQFMDQTNPLAELTHKRRLSALGPGGLTRERAGFEVRDVHYSHYGRMCPIETPEGPNIGLINSLSSFAKVNEFGFIETPYRRVDPETGLVTGHVDYLTADEEDNYVVAQANMKLSEEGEFLDEDIVARFRGENIVTNKERIDYMDVSPKQVVSAATACIPFLENDDSNRALMGANMQRQAVPLMNPESPIVGTGMEYVSAKDSGAAVICKHPGIVERVEAREVWVRRYVEVDGQTVKGDLDRYKMQKFIRSNQGTCYNQRPIVSVGNEVVKGEILADGPSMELGELALGRNVLVGFMTWDGYNYEDAIIMSERLVKDDVYTSIHIEEYESEARDTKLGPEEITRDIPNVGEDALRNLDERGIIRVGAEVKDGDLLVGKVTPKGVTELTAEERLLHAIFGEKAREVRDTSLRVPHGGGGIILDVKVFNREDGDELPPGVNQLVRAYIVQKRKISEGDKMAGRHGNKGVISRILPEEDMPYLPDGTPIDIMLNPLGVPSRMNIGQVLELHLGMAARYLGIHIATPVFDGAREEDVWGTIEEAGMANDAKTILYDGRTGEPFDNRVSVGVMYMIKLAHMVDDKLHARSTGPYSLVTQQPLGGKAQFGGQRFGEMEVWALEAYGAAYTLQEILTVKSDDVVGRVKTYEAIVKGENVPEPGVPESFKVLIKELQSLGMDVKMMSSDDTEIEMRDTEDDDDHQSADKLNVEVETTKE</sequence>
<feature type="chain" id="PRO_0000224029" description="DNA-directed RNA polymerase subunit beta">
    <location>
        <begin position="1"/>
        <end position="1177"/>
    </location>
</feature>
<feature type="region of interest" description="Disordered" evidence="2">
    <location>
        <begin position="1147"/>
        <end position="1177"/>
    </location>
</feature>
<feature type="compositionally biased region" description="Acidic residues" evidence="2">
    <location>
        <begin position="1147"/>
        <end position="1161"/>
    </location>
</feature>
<feature type="compositionally biased region" description="Basic and acidic residues" evidence="2">
    <location>
        <begin position="1162"/>
        <end position="1177"/>
    </location>
</feature>
<organism>
    <name type="scientific">Bacillus thuringiensis subsp. konkukian (strain 97-27)</name>
    <dbReference type="NCBI Taxonomy" id="281309"/>
    <lineage>
        <taxon>Bacteria</taxon>
        <taxon>Bacillati</taxon>
        <taxon>Bacillota</taxon>
        <taxon>Bacilli</taxon>
        <taxon>Bacillales</taxon>
        <taxon>Bacillaceae</taxon>
        <taxon>Bacillus</taxon>
        <taxon>Bacillus cereus group</taxon>
    </lineage>
</organism>